<protein>
    <recommendedName>
        <fullName evidence="1">Large-conductance mechanosensitive channel</fullName>
    </recommendedName>
</protein>
<sequence length="141" mass="15184">MLEEFKKFALRGNVVDLAVGVIIGAAFGAIVNSLVQDVIMPIIGAVTGGLDFSNYYIPLSSKVQDGMPYAEAKKVGAVIGYGQFLTLAVNFTIIAFVLFMVIRAMNVLKSREEAKPKPVAEVPADVKLLGEIRDLLAARRV</sequence>
<evidence type="ECO:0000255" key="1">
    <source>
        <dbReference type="HAMAP-Rule" id="MF_00115"/>
    </source>
</evidence>
<proteinExistence type="inferred from homology"/>
<comment type="function">
    <text evidence="1">Channel that opens in response to stretch forces in the membrane lipid bilayer. May participate in the regulation of osmotic pressure changes within the cell.</text>
</comment>
<comment type="subunit">
    <text evidence="1">Homopentamer.</text>
</comment>
<comment type="subcellular location">
    <subcellularLocation>
        <location evidence="1">Cell inner membrane</location>
        <topology evidence="1">Multi-pass membrane protein</topology>
    </subcellularLocation>
</comment>
<comment type="similarity">
    <text evidence="1">Belongs to the MscL family.</text>
</comment>
<name>MSCL_METEP</name>
<keyword id="KW-0997">Cell inner membrane</keyword>
<keyword id="KW-1003">Cell membrane</keyword>
<keyword id="KW-0407">Ion channel</keyword>
<keyword id="KW-0406">Ion transport</keyword>
<keyword id="KW-0472">Membrane</keyword>
<keyword id="KW-0812">Transmembrane</keyword>
<keyword id="KW-1133">Transmembrane helix</keyword>
<keyword id="KW-0813">Transport</keyword>
<reference key="1">
    <citation type="submission" date="2007-12" db="EMBL/GenBank/DDBJ databases">
        <title>Complete sequence of Methylobacterium extorquens PA1.</title>
        <authorList>
            <consortium name="US DOE Joint Genome Institute"/>
            <person name="Copeland A."/>
            <person name="Lucas S."/>
            <person name="Lapidus A."/>
            <person name="Barry K."/>
            <person name="Glavina del Rio T."/>
            <person name="Dalin E."/>
            <person name="Tice H."/>
            <person name="Pitluck S."/>
            <person name="Saunders E."/>
            <person name="Brettin T."/>
            <person name="Bruce D."/>
            <person name="Detter J.C."/>
            <person name="Han C."/>
            <person name="Schmutz J."/>
            <person name="Larimer F."/>
            <person name="Land M."/>
            <person name="Hauser L."/>
            <person name="Kyrpides N."/>
            <person name="Kim E."/>
            <person name="Marx C."/>
            <person name="Richardson P."/>
        </authorList>
    </citation>
    <scope>NUCLEOTIDE SEQUENCE [LARGE SCALE GENOMIC DNA]</scope>
    <source>
        <strain>PA1</strain>
    </source>
</reference>
<feature type="chain" id="PRO_1000094905" description="Large-conductance mechanosensitive channel">
    <location>
        <begin position="1"/>
        <end position="141"/>
    </location>
</feature>
<feature type="transmembrane region" description="Helical" evidence="1">
    <location>
        <begin position="14"/>
        <end position="34"/>
    </location>
</feature>
<feature type="transmembrane region" description="Helical" evidence="1">
    <location>
        <begin position="38"/>
        <end position="58"/>
    </location>
</feature>
<feature type="transmembrane region" description="Helical" evidence="1">
    <location>
        <begin position="82"/>
        <end position="102"/>
    </location>
</feature>
<dbReference type="EMBL" id="CP000908">
    <property type="protein sequence ID" value="ABY30972.1"/>
    <property type="molecule type" value="Genomic_DNA"/>
</dbReference>
<dbReference type="RefSeq" id="WP_003600729.1">
    <property type="nucleotide sequence ID" value="NC_010172.1"/>
</dbReference>
<dbReference type="SMR" id="A9W5W6"/>
<dbReference type="KEGG" id="mex:Mext_2579"/>
<dbReference type="eggNOG" id="COG1970">
    <property type="taxonomic scope" value="Bacteria"/>
</dbReference>
<dbReference type="HOGENOM" id="CLU_095787_0_1_5"/>
<dbReference type="BioCyc" id="MEXT419610:MEXT_RS12995-MONOMER"/>
<dbReference type="GO" id="GO:0005886">
    <property type="term" value="C:plasma membrane"/>
    <property type="evidence" value="ECO:0007669"/>
    <property type="project" value="UniProtKB-SubCell"/>
</dbReference>
<dbReference type="GO" id="GO:0008381">
    <property type="term" value="F:mechanosensitive monoatomic ion channel activity"/>
    <property type="evidence" value="ECO:0007669"/>
    <property type="project" value="UniProtKB-UniRule"/>
</dbReference>
<dbReference type="Gene3D" id="1.10.1200.120">
    <property type="entry name" value="Large-conductance mechanosensitive channel, MscL, domain 1"/>
    <property type="match status" value="1"/>
</dbReference>
<dbReference type="HAMAP" id="MF_00115">
    <property type="entry name" value="MscL"/>
    <property type="match status" value="1"/>
</dbReference>
<dbReference type="InterPro" id="IPR019823">
    <property type="entry name" value="Mechanosensitive_channel_CS"/>
</dbReference>
<dbReference type="InterPro" id="IPR001185">
    <property type="entry name" value="MS_channel"/>
</dbReference>
<dbReference type="InterPro" id="IPR037673">
    <property type="entry name" value="MSC/AndL"/>
</dbReference>
<dbReference type="InterPro" id="IPR036019">
    <property type="entry name" value="MscL_channel"/>
</dbReference>
<dbReference type="NCBIfam" id="TIGR00220">
    <property type="entry name" value="mscL"/>
    <property type="match status" value="1"/>
</dbReference>
<dbReference type="NCBIfam" id="NF001843">
    <property type="entry name" value="PRK00567.1-4"/>
    <property type="match status" value="1"/>
</dbReference>
<dbReference type="NCBIfam" id="NF010557">
    <property type="entry name" value="PRK13952.1"/>
    <property type="match status" value="1"/>
</dbReference>
<dbReference type="PANTHER" id="PTHR30266:SF2">
    <property type="entry name" value="LARGE-CONDUCTANCE MECHANOSENSITIVE CHANNEL"/>
    <property type="match status" value="1"/>
</dbReference>
<dbReference type="PANTHER" id="PTHR30266">
    <property type="entry name" value="MECHANOSENSITIVE CHANNEL MSCL"/>
    <property type="match status" value="1"/>
</dbReference>
<dbReference type="Pfam" id="PF01741">
    <property type="entry name" value="MscL"/>
    <property type="match status" value="1"/>
</dbReference>
<dbReference type="PRINTS" id="PR01264">
    <property type="entry name" value="MECHCHANNEL"/>
</dbReference>
<dbReference type="SUPFAM" id="SSF81330">
    <property type="entry name" value="Gated mechanosensitive channel"/>
    <property type="match status" value="1"/>
</dbReference>
<dbReference type="PROSITE" id="PS01327">
    <property type="entry name" value="MSCL"/>
    <property type="match status" value="1"/>
</dbReference>
<gene>
    <name evidence="1" type="primary">mscL</name>
    <name type="ordered locus">Mext_2579</name>
</gene>
<accession>A9W5W6</accession>
<organism>
    <name type="scientific">Methylorubrum extorquens (strain PA1)</name>
    <name type="common">Methylobacterium extorquens</name>
    <dbReference type="NCBI Taxonomy" id="419610"/>
    <lineage>
        <taxon>Bacteria</taxon>
        <taxon>Pseudomonadati</taxon>
        <taxon>Pseudomonadota</taxon>
        <taxon>Alphaproteobacteria</taxon>
        <taxon>Hyphomicrobiales</taxon>
        <taxon>Methylobacteriaceae</taxon>
        <taxon>Methylorubrum</taxon>
    </lineage>
</organism>